<comment type="function">
    <text evidence="1">Exerts its effect at some terminal stage of cytochrome c oxidase synthesis, probably by being involved in the insertion of the copper B into subunit I.</text>
</comment>
<comment type="subcellular location">
    <subcellularLocation>
        <location evidence="1">Cell inner membrane</location>
        <topology evidence="1">Single-pass type II membrane protein</topology>
        <orientation evidence="1">Periplasmic side</orientation>
    </subcellularLocation>
</comment>
<comment type="similarity">
    <text evidence="1">Belongs to the COX11/CtaG family.</text>
</comment>
<protein>
    <recommendedName>
        <fullName evidence="1">Cytochrome c oxidase assembly protein CtaG</fullName>
    </recommendedName>
</protein>
<organism>
    <name type="scientific">Rhodopseudomonas palustris (strain HaA2)</name>
    <dbReference type="NCBI Taxonomy" id="316058"/>
    <lineage>
        <taxon>Bacteria</taxon>
        <taxon>Pseudomonadati</taxon>
        <taxon>Pseudomonadota</taxon>
        <taxon>Alphaproteobacteria</taxon>
        <taxon>Hyphomicrobiales</taxon>
        <taxon>Nitrobacteraceae</taxon>
        <taxon>Rhodopseudomonas</taxon>
    </lineage>
</organism>
<name>COXZ_RHOP2</name>
<proteinExistence type="inferred from homology"/>
<dbReference type="EMBL" id="CP000250">
    <property type="protein sequence ID" value="ABD09267.1"/>
    <property type="molecule type" value="Genomic_DNA"/>
</dbReference>
<dbReference type="RefSeq" id="WP_011443449.1">
    <property type="nucleotide sequence ID" value="NC_007778.1"/>
</dbReference>
<dbReference type="SMR" id="Q2IR93"/>
<dbReference type="STRING" id="316058.RPB_4584"/>
<dbReference type="KEGG" id="rpb:RPB_4584"/>
<dbReference type="eggNOG" id="COG3175">
    <property type="taxonomic scope" value="Bacteria"/>
</dbReference>
<dbReference type="HOGENOM" id="CLU_045000_5_0_5"/>
<dbReference type="OrthoDB" id="9804841at2"/>
<dbReference type="Proteomes" id="UP000008809">
    <property type="component" value="Chromosome"/>
</dbReference>
<dbReference type="GO" id="GO:0005886">
    <property type="term" value="C:plasma membrane"/>
    <property type="evidence" value="ECO:0007669"/>
    <property type="project" value="UniProtKB-SubCell"/>
</dbReference>
<dbReference type="GO" id="GO:0005507">
    <property type="term" value="F:copper ion binding"/>
    <property type="evidence" value="ECO:0007669"/>
    <property type="project" value="InterPro"/>
</dbReference>
<dbReference type="GO" id="GO:0008535">
    <property type="term" value="P:respiratory chain complex IV assembly"/>
    <property type="evidence" value="ECO:0007669"/>
    <property type="project" value="UniProtKB-UniRule"/>
</dbReference>
<dbReference type="FunFam" id="2.60.370.10:FF:000001">
    <property type="entry name" value="COX11 cytochrome c oxidase assembly homolog"/>
    <property type="match status" value="1"/>
</dbReference>
<dbReference type="Gene3D" id="2.60.370.10">
    <property type="entry name" value="Ctag/Cox11"/>
    <property type="match status" value="1"/>
</dbReference>
<dbReference type="HAMAP" id="MF_00155">
    <property type="entry name" value="CtaG"/>
    <property type="match status" value="1"/>
</dbReference>
<dbReference type="InterPro" id="IPR023471">
    <property type="entry name" value="CtaG/Cox11_dom_sf"/>
</dbReference>
<dbReference type="InterPro" id="IPR007533">
    <property type="entry name" value="Cyt_c_oxidase_assmbl_CtaG"/>
</dbReference>
<dbReference type="NCBIfam" id="NF003465">
    <property type="entry name" value="PRK05089.1"/>
    <property type="match status" value="1"/>
</dbReference>
<dbReference type="PANTHER" id="PTHR21320:SF3">
    <property type="entry name" value="CYTOCHROME C OXIDASE ASSEMBLY PROTEIN COX11, MITOCHONDRIAL-RELATED"/>
    <property type="match status" value="1"/>
</dbReference>
<dbReference type="PANTHER" id="PTHR21320">
    <property type="entry name" value="CYTOCHROME C OXIDASE ASSEMBLY PROTEIN COX11-RELATED"/>
    <property type="match status" value="1"/>
</dbReference>
<dbReference type="Pfam" id="PF04442">
    <property type="entry name" value="CtaG_Cox11"/>
    <property type="match status" value="1"/>
</dbReference>
<dbReference type="PIRSF" id="PIRSF005413">
    <property type="entry name" value="COX11"/>
    <property type="match status" value="1"/>
</dbReference>
<dbReference type="SUPFAM" id="SSF110111">
    <property type="entry name" value="Ctag/Cox11"/>
    <property type="match status" value="1"/>
</dbReference>
<sequence>MPDTQPNVSPNPIRRRGLGRDATVASICGLVVALMVGASFAAVPFYNWFCRTTGFNGTTQVAGVAPSSAPLARKVAVRFDSNINGLPWTFEPEQREIEVAIGQVFTAYYSVTNTAKHATTGQAAYNVTPLTVGSYFTKINCFCFTEQTLAAGETREMPVVFYVDPSFAADSENDAVKTITLSYTFYPVREPAPKPLASTAPDKRKGNL</sequence>
<evidence type="ECO:0000255" key="1">
    <source>
        <dbReference type="HAMAP-Rule" id="MF_00155"/>
    </source>
</evidence>
<accession>Q2IR93</accession>
<gene>
    <name evidence="1" type="primary">ctaG</name>
    <name type="ordered locus">RPB_4584</name>
</gene>
<reference key="1">
    <citation type="submission" date="2006-01" db="EMBL/GenBank/DDBJ databases">
        <title>Complete sequence of Rhodopseudomonas palustris HaA2.</title>
        <authorList>
            <consortium name="US DOE Joint Genome Institute"/>
            <person name="Copeland A."/>
            <person name="Lucas S."/>
            <person name="Lapidus A."/>
            <person name="Barry K."/>
            <person name="Detter J.C."/>
            <person name="Glavina T."/>
            <person name="Hammon N."/>
            <person name="Israni S."/>
            <person name="Pitluck S."/>
            <person name="Chain P."/>
            <person name="Malfatti S."/>
            <person name="Shin M."/>
            <person name="Vergez L."/>
            <person name="Schmutz J."/>
            <person name="Larimer F."/>
            <person name="Land M."/>
            <person name="Hauser L."/>
            <person name="Pelletier D.A."/>
            <person name="Kyrpides N."/>
            <person name="Anderson I."/>
            <person name="Oda Y."/>
            <person name="Harwood C.S."/>
            <person name="Richardson P."/>
        </authorList>
    </citation>
    <scope>NUCLEOTIDE SEQUENCE [LARGE SCALE GENOMIC DNA]</scope>
    <source>
        <strain>HaA2</strain>
    </source>
</reference>
<keyword id="KW-0997">Cell inner membrane</keyword>
<keyword id="KW-1003">Cell membrane</keyword>
<keyword id="KW-0186">Copper</keyword>
<keyword id="KW-0472">Membrane</keyword>
<keyword id="KW-1185">Reference proteome</keyword>
<keyword id="KW-0735">Signal-anchor</keyword>
<keyword id="KW-0812">Transmembrane</keyword>
<keyword id="KW-1133">Transmembrane helix</keyword>
<feature type="chain" id="PRO_1000011358" description="Cytochrome c oxidase assembly protein CtaG">
    <location>
        <begin position="1"/>
        <end position="208"/>
    </location>
</feature>
<feature type="topological domain" description="Cytoplasmic" evidence="1">
    <location>
        <begin position="1"/>
        <end position="19"/>
    </location>
</feature>
<feature type="transmembrane region" description="Helical; Signal-anchor for type II membrane protein" evidence="1">
    <location>
        <begin position="20"/>
        <end position="42"/>
    </location>
</feature>
<feature type="topological domain" description="Periplasmic" evidence="1">
    <location>
        <begin position="43"/>
        <end position="208"/>
    </location>
</feature>